<accession>O95803</accession>
<accession>B4DI67</accession>
<accession>Q4W5C1</accession>
<accession>Q4W5D0</accession>
<accession>Q6UWC5</accession>
<accession>Q9UP21</accession>
<proteinExistence type="evidence at protein level"/>
<comment type="function">
    <text evidence="4">Essential bifunctional enzyme that catalyzes both the N-deacetylation and the N-sulfation of glucosamine (GlcNAc) of the glycosaminoglycan in heparan sulfate. Modifies the GlcNAc-GlcA disaccharide repeating sugar backbone to make N-sulfated heparosan, a prerequisite substrate for later modifications in heparin biosynthesis. Has high deacetylase activity but low sulfotransferase activity.</text>
</comment>
<comment type="catalytic activity">
    <reaction evidence="4">
        <text>alpha-D-glucosaminyl-[heparan sulfate](n) + 3'-phosphoadenylyl sulfate = N-sulfo-alpha-D-glucosaminyl-[heparan sulfate](n) + adenosine 3',5'-bisphosphate + 2 H(+)</text>
        <dbReference type="Rhea" id="RHEA:21980"/>
        <dbReference type="Rhea" id="RHEA-COMP:9830"/>
        <dbReference type="Rhea" id="RHEA-COMP:14602"/>
        <dbReference type="ChEBI" id="CHEBI:15378"/>
        <dbReference type="ChEBI" id="CHEBI:58339"/>
        <dbReference type="ChEBI" id="CHEBI:58343"/>
        <dbReference type="ChEBI" id="CHEBI:58388"/>
        <dbReference type="ChEBI" id="CHEBI:140572"/>
        <dbReference type="EC" id="2.8.2.8"/>
    </reaction>
</comment>
<comment type="pathway">
    <text evidence="4">Glycan metabolism; heparan sulfate biosynthesis.</text>
</comment>
<comment type="pathway">
    <text evidence="4">Glycan metabolism; heparin biosynthesis.</text>
</comment>
<comment type="subunit">
    <text evidence="1">Monomer.</text>
</comment>
<comment type="subcellular location">
    <subcellularLocation>
        <location evidence="1">Golgi apparatus membrane</location>
        <topology evidence="1">Single-pass type II membrane protein</topology>
    </subcellularLocation>
</comment>
<comment type="alternative products">
    <event type="alternative splicing"/>
    <isoform>
        <id>O95803-1</id>
        <name>1</name>
        <sequence type="displayed"/>
    </isoform>
    <isoform>
        <id>O95803-2</id>
        <name>2</name>
        <sequence type="described" ref="VSP_017405 VSP_017406"/>
    </isoform>
    <isoform>
        <id>O95803-3</id>
        <name>3</name>
        <sequence type="described" ref="VSP_054350 VSP_054351 VSP_054352"/>
    </isoform>
</comment>
<comment type="tissue specificity">
    <text evidence="4">Expressed in brain, kidney, liver, fetal and adult lung, adult pancreas, placenta, fetal spleen and fetal thymus. Not detected in adult/ fetal heart and skeletal muscle.</text>
</comment>
<comment type="miscellaneous">
    <text>The presence of 4 different heparan sulfate N-deacetylase/N-sulfotransferase enzymes in mammals, as well as differences in their enzyme activity suggest that some initiate heparan sulfate modification/sulfation reactions, whereas other later on fill in or extend already modified heparan sulfate sequences.</text>
</comment>
<comment type="similarity">
    <text evidence="7">Belongs to the sulfotransferase 1 family. NDST subfamily.</text>
</comment>
<organism>
    <name type="scientific">Homo sapiens</name>
    <name type="common">Human</name>
    <dbReference type="NCBI Taxonomy" id="9606"/>
    <lineage>
        <taxon>Eukaryota</taxon>
        <taxon>Metazoa</taxon>
        <taxon>Chordata</taxon>
        <taxon>Craniata</taxon>
        <taxon>Vertebrata</taxon>
        <taxon>Euteleostomi</taxon>
        <taxon>Mammalia</taxon>
        <taxon>Eutheria</taxon>
        <taxon>Euarchontoglires</taxon>
        <taxon>Primates</taxon>
        <taxon>Haplorrhini</taxon>
        <taxon>Catarrhini</taxon>
        <taxon>Hominidae</taxon>
        <taxon>Homo</taxon>
    </lineage>
</organism>
<keyword id="KW-0025">Alternative splicing</keyword>
<keyword id="KW-1015">Disulfide bond</keyword>
<keyword id="KW-0325">Glycoprotein</keyword>
<keyword id="KW-0333">Golgi apparatus</keyword>
<keyword id="KW-0378">Hydrolase</keyword>
<keyword id="KW-0472">Membrane</keyword>
<keyword id="KW-0511">Multifunctional enzyme</keyword>
<keyword id="KW-1267">Proteomics identification</keyword>
<keyword id="KW-1185">Reference proteome</keyword>
<keyword id="KW-0735">Signal-anchor</keyword>
<keyword id="KW-0808">Transferase</keyword>
<keyword id="KW-0812">Transmembrane</keyword>
<keyword id="KW-1133">Transmembrane helix</keyword>
<feature type="chain" id="PRO_0000225659" description="Bifunctional heparan sulfate N-deacetylase/N-sulfotransferase 3">
    <location>
        <begin position="1"/>
        <end position="873"/>
    </location>
</feature>
<feature type="topological domain" description="Cytoplasmic" evidence="2">
    <location>
        <begin position="1"/>
        <end position="13"/>
    </location>
</feature>
<feature type="transmembrane region" description="Helical; Signal-anchor for type II membrane protein" evidence="2">
    <location>
        <begin position="14"/>
        <end position="34"/>
    </location>
</feature>
<feature type="topological domain" description="Lumenal" evidence="2">
    <location>
        <begin position="35"/>
        <end position="873"/>
    </location>
</feature>
<feature type="region of interest" description="Heparan sulfate N-deacetylase 3">
    <location>
        <begin position="36"/>
        <end position="589"/>
    </location>
</feature>
<feature type="region of interest" description="Heparan sulfate N-sulfotransferase 3">
    <location>
        <begin position="590"/>
        <end position="873"/>
    </location>
</feature>
<feature type="active site" description="For sulfotransferase activity" evidence="1">
    <location>
        <position position="605"/>
    </location>
</feature>
<feature type="binding site" evidence="1">
    <location>
        <begin position="605"/>
        <end position="609"/>
    </location>
    <ligand>
        <name>3'-phosphoadenylyl sulfate</name>
        <dbReference type="ChEBI" id="CHEBI:58339"/>
    </ligand>
</feature>
<feature type="binding site" evidence="1">
    <location>
        <position position="703"/>
    </location>
    <ligand>
        <name>3'-phosphoadenylyl sulfate</name>
        <dbReference type="ChEBI" id="CHEBI:58339"/>
    </ligand>
</feature>
<feature type="binding site" evidence="1">
    <location>
        <begin position="824"/>
        <end position="828"/>
    </location>
    <ligand>
        <name>3'-phosphoadenylyl sulfate</name>
        <dbReference type="ChEBI" id="CHEBI:58339"/>
    </ligand>
</feature>
<feature type="glycosylation site" description="N-linked (GlcNAc...) asparagine" evidence="2">
    <location>
        <position position="146"/>
    </location>
</feature>
<feature type="glycosylation site" description="N-linked (GlcNAc...) asparagine" evidence="2">
    <location>
        <position position="226"/>
    </location>
</feature>
<feature type="glycosylation site" description="N-linked (GlcNAc...) asparagine" evidence="2">
    <location>
        <position position="342"/>
    </location>
</feature>
<feature type="glycosylation site" description="N-linked (GlcNAc...) asparagine" evidence="2">
    <location>
        <position position="392"/>
    </location>
</feature>
<feature type="glycosylation site" description="N-linked (GlcNAc...) asparagine" evidence="2">
    <location>
        <position position="658"/>
    </location>
</feature>
<feature type="glycosylation site" description="N-linked (GlcNAc...) asparagine" evidence="2">
    <location>
        <position position="794"/>
    </location>
</feature>
<feature type="disulfide bond" evidence="1">
    <location>
        <begin position="809"/>
        <end position="819"/>
    </location>
</feature>
<feature type="splice variant" id="VSP_054350" description="In isoform 3." evidence="6">
    <location>
        <begin position="328"/>
        <end position="408"/>
    </location>
</feature>
<feature type="splice variant" id="VSP_017405" description="In isoform 2." evidence="5">
    <original>ALLDTQNLLRAQITNFTFNLGFSGKFYHTGTEEEDEGDDCLLGSVDEFWWFPHMWSHM</original>
    <variation>VRLYFLKFQSSVHLPAGIQLSQFVLQLGYPGHGIYWESLGNLGLSLTLNQLRRLCISI</variation>
    <location>
        <begin position="328"/>
        <end position="385"/>
    </location>
</feature>
<feature type="splice variant" id="VSP_017406" description="In isoform 2." evidence="5">
    <location>
        <begin position="386"/>
        <end position="873"/>
    </location>
</feature>
<feature type="splice variant" id="VSP_054351" description="In isoform 3." evidence="6">
    <original>QFFNRNNY</original>
    <variation>YGFLPSPI</variation>
    <location>
        <begin position="635"/>
        <end position="642"/>
    </location>
</feature>
<feature type="splice variant" id="VSP_054352" description="In isoform 3." evidence="6">
    <location>
        <begin position="643"/>
        <end position="873"/>
    </location>
</feature>
<feature type="sequence variant" id="VAR_036131" description="In a colorectal cancer sample; somatic mutation." evidence="3">
    <original>H</original>
    <variation>Q</variation>
    <location>
        <position position="264"/>
    </location>
</feature>
<feature type="sequence conflict" description="In Ref. 2; AAD46061." evidence="7" ref="2">
    <original>HRHFQRTVIL</original>
    <variation>STEQLSKEPVISW</variation>
    <location>
        <begin position="8"/>
        <end position="17"/>
    </location>
</feature>
<sequence>MSFIMKLHRHFQRTVILLATFCMVSIIISAYYLYSGYKQENELSETASEVDCGDLQHLPYQLMEVKAMKLFDASRTDPTVLVFVESQYSSLGQDIIMILESSRFQYHIEIAPGKGDLPVLIDKMKGKYILIIYENILKYINMDSWNRSLLDKYCVEYGVGVIGFHKTSEKSVQSFQLKGFPFSIYGNLAVKDCCINPHSPLIRVTKSSKLEKGSLPGTDWTVFQINHSAYQPVIFAKVKTPENLSPSISKGAFYATIIHDLGLHDGIQRVLFGNNLNFWLHKLIFIDAISFLSGKRLTLSLDRYILVDIDDIFVGKEGTRMNTNDVKALLDTQNLLRAQITNFTFNLGFSGKFYHTGTEEEDEGDDCLLGSVDEFWWFPHMWSHMQPHLFHNESSLVEQMILNKKFALEHGIPTDMGYAVAPHHSGVYPVHVQLYEAWKKVWNIKITSTEEYPHLKPARYRRGFIHKNIMVLPRQTCGLFTHTIFYKEYPGGPKELDKSIQGGELFFTVVLNPISIFMTHLSNYGNDRLGLYTFVNLANFVKSWTNLRLQTLPPVQLAHKYFELFPDQKDPLWQNPCDDKRHRDIWSKEKTCDRLPKFLVIGPQKTGTTALYLFLVMHPSILSNSPSPKTFEEVQFFNRNNYHRGIDWYMDFFPVPSNVTTDFLFEKSANYFHSEEAPKRAASLVPKAKIITILIDPSDRAYSWYQHQRSHEDPAALKFSFYEVISAGPRAPSELRALQKRCLVPGWYASHIERWLVYFPPFQLLIIDGQQLRTDPATVMDEVQKFLGVLPHYNYSEALTFDSHKGFWCQLLEEGKTKCLGKSKGRKYPPMDSDSRTFLSSYYRDHNVELSKLLHKLGQPLPSWLRQELQKVR</sequence>
<name>NDST3_HUMAN</name>
<protein>
    <recommendedName>
        <fullName evidence="7">Bifunctional heparan sulfate N-deacetylase/N-sulfotransferase 3</fullName>
    </recommendedName>
    <alternativeName>
        <fullName>Glucosaminyl N-deacetylase/N-sulfotransferase 3</fullName>
        <shortName>NDST-3</shortName>
        <shortName>hNDST-3</shortName>
    </alternativeName>
    <alternativeName>
        <fullName>N-heparan sulfate sulfotransferase 3</fullName>
        <shortName>N-HSST 3</shortName>
    </alternativeName>
    <domain>
        <recommendedName>
            <fullName evidence="7">Heparan sulfate N-deacetylase NDST3</fullName>
            <ecNumber evidence="4">3.-.-.-</ecNumber>
        </recommendedName>
    </domain>
    <domain>
        <recommendedName>
            <fullName evidence="7">[heparan sulfate]-glucosamine N-sulfotransferase NDST3</fullName>
            <ecNumber evidence="4">2.8.2.8</ecNumber>
        </recommendedName>
    </domain>
</protein>
<gene>
    <name evidence="8" type="primary">NDST3</name>
    <name type="synonym">HSST3</name>
    <name type="ORF">UNQ2544/PRO4998</name>
</gene>
<evidence type="ECO:0000250" key="1"/>
<evidence type="ECO:0000255" key="2"/>
<evidence type="ECO:0000269" key="3">
    <source>
    </source>
</evidence>
<evidence type="ECO:0000269" key="4">
    <source>
    </source>
</evidence>
<evidence type="ECO:0000303" key="5">
    <source>
    </source>
</evidence>
<evidence type="ECO:0000303" key="6">
    <source>
    </source>
</evidence>
<evidence type="ECO:0000305" key="7"/>
<evidence type="ECO:0000312" key="8">
    <source>
        <dbReference type="HGNC" id="HGNC:7682"/>
    </source>
</evidence>
<dbReference type="EC" id="3.-.-.-" evidence="4"/>
<dbReference type="EC" id="2.8.2.8" evidence="4"/>
<dbReference type="EMBL" id="AF074924">
    <property type="protein sequence ID" value="AAD15978.1"/>
    <property type="molecule type" value="mRNA"/>
</dbReference>
<dbReference type="EMBL" id="AF076605">
    <property type="protein sequence ID" value="AAD46061.1"/>
    <property type="molecule type" value="mRNA"/>
</dbReference>
<dbReference type="EMBL" id="AY358852">
    <property type="protein sequence ID" value="AAQ89211.1"/>
    <property type="molecule type" value="mRNA"/>
</dbReference>
<dbReference type="EMBL" id="AK295439">
    <property type="protein sequence ID" value="BAG58379.1"/>
    <property type="molecule type" value="mRNA"/>
</dbReference>
<dbReference type="EMBL" id="AC096762">
    <property type="status" value="NOT_ANNOTATED_CDS"/>
    <property type="molecule type" value="Genomic_DNA"/>
</dbReference>
<dbReference type="EMBL" id="AC108201">
    <property type="protein sequence ID" value="AAY41001.1"/>
    <property type="molecule type" value="Genomic_DNA"/>
</dbReference>
<dbReference type="EMBL" id="AC110999">
    <property type="protein sequence ID" value="AAY41056.1"/>
    <property type="molecule type" value="Genomic_DNA"/>
</dbReference>
<dbReference type="EMBL" id="AC116639">
    <property type="status" value="NOT_ANNOTATED_CDS"/>
    <property type="molecule type" value="Genomic_DNA"/>
</dbReference>
<dbReference type="EMBL" id="BC109309">
    <property type="protein sequence ID" value="AAI09310.1"/>
    <property type="molecule type" value="mRNA"/>
</dbReference>
<dbReference type="EMBL" id="BC109310">
    <property type="protein sequence ID" value="AAI09311.1"/>
    <property type="molecule type" value="mRNA"/>
</dbReference>
<dbReference type="CCDS" id="CCDS3708.1">
    <molecule id="O95803-1"/>
</dbReference>
<dbReference type="RefSeq" id="NP_004775.1">
    <molecule id="O95803-1"/>
    <property type="nucleotide sequence ID" value="NM_004784.3"/>
</dbReference>
<dbReference type="RefSeq" id="XP_006714479.1">
    <molecule id="O95803-1"/>
    <property type="nucleotide sequence ID" value="XM_006714416.4"/>
</dbReference>
<dbReference type="RefSeq" id="XP_054207229.1">
    <molecule id="O95803-1"/>
    <property type="nucleotide sequence ID" value="XM_054351254.1"/>
</dbReference>
<dbReference type="SMR" id="O95803"/>
<dbReference type="BioGRID" id="114751">
    <property type="interactions" value="8"/>
</dbReference>
<dbReference type="FunCoup" id="O95803">
    <property type="interactions" value="252"/>
</dbReference>
<dbReference type="IntAct" id="O95803">
    <property type="interactions" value="7"/>
</dbReference>
<dbReference type="STRING" id="9606.ENSP00000296499"/>
<dbReference type="GlyCosmos" id="O95803">
    <property type="glycosylation" value="6 sites, No reported glycans"/>
</dbReference>
<dbReference type="GlyGen" id="O95803">
    <property type="glycosylation" value="6 sites"/>
</dbReference>
<dbReference type="iPTMnet" id="O95803"/>
<dbReference type="PhosphoSitePlus" id="O95803"/>
<dbReference type="BioMuta" id="NDST3"/>
<dbReference type="jPOST" id="O95803"/>
<dbReference type="MassIVE" id="O95803"/>
<dbReference type="PaxDb" id="9606-ENSP00000296499"/>
<dbReference type="PeptideAtlas" id="O95803"/>
<dbReference type="ProteomicsDB" id="4279"/>
<dbReference type="ProteomicsDB" id="51059">
    <molecule id="O95803-1"/>
</dbReference>
<dbReference type="ProteomicsDB" id="51060">
    <molecule id="O95803-2"/>
</dbReference>
<dbReference type="Antibodypedia" id="26593">
    <property type="antibodies" value="126 antibodies from 17 providers"/>
</dbReference>
<dbReference type="DNASU" id="9348"/>
<dbReference type="Ensembl" id="ENST00000296499.6">
    <molecule id="O95803-1"/>
    <property type="protein sequence ID" value="ENSP00000296499.5"/>
    <property type="gene ID" value="ENSG00000164100.9"/>
</dbReference>
<dbReference type="GeneID" id="9348"/>
<dbReference type="KEGG" id="hsa:9348"/>
<dbReference type="MANE-Select" id="ENST00000296499.6">
    <property type="protein sequence ID" value="ENSP00000296499.5"/>
    <property type="RefSeq nucleotide sequence ID" value="NM_004784.3"/>
    <property type="RefSeq protein sequence ID" value="NP_004775.1"/>
</dbReference>
<dbReference type="UCSC" id="uc003ibx.4">
    <molecule id="O95803-1"/>
    <property type="organism name" value="human"/>
</dbReference>
<dbReference type="AGR" id="HGNC:7682"/>
<dbReference type="CTD" id="9348"/>
<dbReference type="DisGeNET" id="9348"/>
<dbReference type="GeneCards" id="NDST3"/>
<dbReference type="HGNC" id="HGNC:7682">
    <property type="gene designation" value="NDST3"/>
</dbReference>
<dbReference type="HPA" id="ENSG00000164100">
    <property type="expression patterns" value="Tissue enhanced (brain, lymphoid tissue, retina)"/>
</dbReference>
<dbReference type="MIM" id="603950">
    <property type="type" value="gene"/>
</dbReference>
<dbReference type="neXtProt" id="NX_O95803"/>
<dbReference type="OpenTargets" id="ENSG00000164100"/>
<dbReference type="PharmGKB" id="PA31488"/>
<dbReference type="VEuPathDB" id="HostDB:ENSG00000164100"/>
<dbReference type="eggNOG" id="KOG3703">
    <property type="taxonomic scope" value="Eukaryota"/>
</dbReference>
<dbReference type="GeneTree" id="ENSGT00940000160665"/>
<dbReference type="HOGENOM" id="CLU_011357_2_0_1"/>
<dbReference type="InParanoid" id="O95803"/>
<dbReference type="OMA" id="VRDCCIN"/>
<dbReference type="OrthoDB" id="8958249at2759"/>
<dbReference type="PAN-GO" id="O95803">
    <property type="GO annotations" value="4 GO annotations based on evolutionary models"/>
</dbReference>
<dbReference type="PhylomeDB" id="O95803"/>
<dbReference type="TreeFam" id="TF313193"/>
<dbReference type="BioCyc" id="MetaCyc:HS09011-MONOMER"/>
<dbReference type="BRENDA" id="2.8.2.8">
    <property type="organism ID" value="2681"/>
</dbReference>
<dbReference type="PathwayCommons" id="O95803"/>
<dbReference type="Reactome" id="R-HSA-2022928">
    <property type="pathway name" value="HS-GAG biosynthesis"/>
</dbReference>
<dbReference type="UniPathway" id="UPA00756"/>
<dbReference type="UniPathway" id="UPA00862"/>
<dbReference type="BioGRID-ORCS" id="9348">
    <property type="hits" value="14 hits in 1145 CRISPR screens"/>
</dbReference>
<dbReference type="ChiTaRS" id="NDST3">
    <property type="organism name" value="human"/>
</dbReference>
<dbReference type="GeneWiki" id="NDST3"/>
<dbReference type="GenomeRNAi" id="9348"/>
<dbReference type="Pharos" id="O95803">
    <property type="development level" value="Tbio"/>
</dbReference>
<dbReference type="PRO" id="PR:O95803"/>
<dbReference type="Proteomes" id="UP000005640">
    <property type="component" value="Chromosome 4"/>
</dbReference>
<dbReference type="RNAct" id="O95803">
    <property type="molecule type" value="protein"/>
</dbReference>
<dbReference type="Bgee" id="ENSG00000164100">
    <property type="expression patterns" value="Expressed in buccal mucosa cell and 91 other cell types or tissues"/>
</dbReference>
<dbReference type="GO" id="GO:0005794">
    <property type="term" value="C:Golgi apparatus"/>
    <property type="evidence" value="ECO:0000318"/>
    <property type="project" value="GO_Central"/>
</dbReference>
<dbReference type="GO" id="GO:0000139">
    <property type="term" value="C:Golgi membrane"/>
    <property type="evidence" value="ECO:0007669"/>
    <property type="project" value="UniProtKB-SubCell"/>
</dbReference>
<dbReference type="GO" id="GO:0019213">
    <property type="term" value="F:deacetylase activity"/>
    <property type="evidence" value="ECO:0000318"/>
    <property type="project" value="GO_Central"/>
</dbReference>
<dbReference type="GO" id="GO:0102140">
    <property type="term" value="F:heparan sulfate N-deacetylase activity"/>
    <property type="evidence" value="ECO:0000314"/>
    <property type="project" value="UniProtKB"/>
</dbReference>
<dbReference type="GO" id="GO:0015016">
    <property type="term" value="F:heparan sulfate N-sulfotransferase activity"/>
    <property type="evidence" value="ECO:0000314"/>
    <property type="project" value="UniProtKB"/>
</dbReference>
<dbReference type="GO" id="GO:0015012">
    <property type="term" value="P:heparan sulfate proteoglycan biosynthetic process"/>
    <property type="evidence" value="ECO:0000314"/>
    <property type="project" value="UniProtKB"/>
</dbReference>
<dbReference type="GO" id="GO:0030210">
    <property type="term" value="P:heparin proteoglycan biosynthetic process"/>
    <property type="evidence" value="ECO:0007669"/>
    <property type="project" value="UniProtKB-UniPathway"/>
</dbReference>
<dbReference type="FunFam" id="3.40.50.300:FF:000176">
    <property type="entry name" value="bifunctional heparan sulfate N-deacetylase/N-sulfotransferase 1"/>
    <property type="match status" value="1"/>
</dbReference>
<dbReference type="Gene3D" id="3.40.50.300">
    <property type="entry name" value="P-loop containing nucleotide triphosphate hydrolases"/>
    <property type="match status" value="1"/>
</dbReference>
<dbReference type="InterPro" id="IPR021930">
    <property type="entry name" value="Heparan_SO4_deacetylase_dom"/>
</dbReference>
<dbReference type="InterPro" id="IPR056793">
    <property type="entry name" value="HSNSD_N"/>
</dbReference>
<dbReference type="InterPro" id="IPR037359">
    <property type="entry name" value="NST/OST"/>
</dbReference>
<dbReference type="InterPro" id="IPR027417">
    <property type="entry name" value="P-loop_NTPase"/>
</dbReference>
<dbReference type="InterPro" id="IPR000863">
    <property type="entry name" value="Sulfotransferase_dom"/>
</dbReference>
<dbReference type="PANTHER" id="PTHR10605:SF29">
    <property type="entry name" value="BIFUNCTIONAL HEPARAN SULFATE N-DEACETYLASE_N-SULFOTRANSFERASE 3"/>
    <property type="match status" value="1"/>
</dbReference>
<dbReference type="PANTHER" id="PTHR10605">
    <property type="entry name" value="HEPARAN SULFATE SULFOTRANSFERASE"/>
    <property type="match status" value="1"/>
</dbReference>
<dbReference type="Pfam" id="PF12062">
    <property type="entry name" value="HSNSD-CE"/>
    <property type="match status" value="1"/>
</dbReference>
<dbReference type="Pfam" id="PF25119">
    <property type="entry name" value="HSNSD_N"/>
    <property type="match status" value="1"/>
</dbReference>
<dbReference type="Pfam" id="PF00685">
    <property type="entry name" value="Sulfotransfer_1"/>
    <property type="match status" value="1"/>
</dbReference>
<dbReference type="SUPFAM" id="SSF52540">
    <property type="entry name" value="P-loop containing nucleoside triphosphate hydrolases"/>
    <property type="match status" value="1"/>
</dbReference>
<reference key="1">
    <citation type="journal article" date="1999" name="J. Biol. Chem.">
        <title>Molecular cloning and expression of a third member of the heparan sulfate/heparin GlcNAc N-deacetylase/ N-sulfotransferase family.</title>
        <authorList>
            <person name="Aikawa J."/>
            <person name="Esko J.D."/>
        </authorList>
    </citation>
    <scope>NUCLEOTIDE SEQUENCE [MRNA] (ISOFORM 1)</scope>
    <scope>FUNCTION</scope>
    <scope>TISSUE SPECIFICITY</scope>
    <scope>CATALYTIC ACTIVITY</scope>
    <source>
        <tissue>Brain</tissue>
    </source>
</reference>
<reference key="2">
    <citation type="submission" date="1998-07" db="EMBL/GenBank/DDBJ databases">
        <authorList>
            <person name="Sakakibara Y."/>
            <person name="Sanematsu F."/>
            <person name="Takami Y."/>
            <person name="Yanagisawa K."/>
            <person name="Nakayama T."/>
            <person name="Suiko M."/>
            <person name="Liu M.-C."/>
        </authorList>
    </citation>
    <scope>NUCLEOTIDE SEQUENCE [MRNA] (ISOFORM 1)</scope>
</reference>
<reference key="3">
    <citation type="journal article" date="2003" name="Genome Res.">
        <title>The secreted protein discovery initiative (SPDI), a large-scale effort to identify novel human secreted and transmembrane proteins: a bioinformatics assessment.</title>
        <authorList>
            <person name="Clark H.F."/>
            <person name="Gurney A.L."/>
            <person name="Abaya E."/>
            <person name="Baker K."/>
            <person name="Baldwin D.T."/>
            <person name="Brush J."/>
            <person name="Chen J."/>
            <person name="Chow B."/>
            <person name="Chui C."/>
            <person name="Crowley C."/>
            <person name="Currell B."/>
            <person name="Deuel B."/>
            <person name="Dowd P."/>
            <person name="Eaton D."/>
            <person name="Foster J.S."/>
            <person name="Grimaldi C."/>
            <person name="Gu Q."/>
            <person name="Hass P.E."/>
            <person name="Heldens S."/>
            <person name="Huang A."/>
            <person name="Kim H.S."/>
            <person name="Klimowski L."/>
            <person name="Jin Y."/>
            <person name="Johnson S."/>
            <person name="Lee J."/>
            <person name="Lewis L."/>
            <person name="Liao D."/>
            <person name="Mark M.R."/>
            <person name="Robbie E."/>
            <person name="Sanchez C."/>
            <person name="Schoenfeld J."/>
            <person name="Seshagiri S."/>
            <person name="Simmons L."/>
            <person name="Singh J."/>
            <person name="Smith V."/>
            <person name="Stinson J."/>
            <person name="Vagts A."/>
            <person name="Vandlen R.L."/>
            <person name="Watanabe C."/>
            <person name="Wieand D."/>
            <person name="Woods K."/>
            <person name="Xie M.-H."/>
            <person name="Yansura D.G."/>
            <person name="Yi S."/>
            <person name="Yu G."/>
            <person name="Yuan J."/>
            <person name="Zhang M."/>
            <person name="Zhang Z."/>
            <person name="Goddard A.D."/>
            <person name="Wood W.I."/>
            <person name="Godowski P.J."/>
            <person name="Gray A.M."/>
        </authorList>
    </citation>
    <scope>NUCLEOTIDE SEQUENCE [LARGE SCALE MRNA] (ISOFORM 2)</scope>
</reference>
<reference key="4">
    <citation type="journal article" date="2004" name="Nat. Genet.">
        <title>Complete sequencing and characterization of 21,243 full-length human cDNAs.</title>
        <authorList>
            <person name="Ota T."/>
            <person name="Suzuki Y."/>
            <person name="Nishikawa T."/>
            <person name="Otsuki T."/>
            <person name="Sugiyama T."/>
            <person name="Irie R."/>
            <person name="Wakamatsu A."/>
            <person name="Hayashi K."/>
            <person name="Sato H."/>
            <person name="Nagai K."/>
            <person name="Kimura K."/>
            <person name="Makita H."/>
            <person name="Sekine M."/>
            <person name="Obayashi M."/>
            <person name="Nishi T."/>
            <person name="Shibahara T."/>
            <person name="Tanaka T."/>
            <person name="Ishii S."/>
            <person name="Yamamoto J."/>
            <person name="Saito K."/>
            <person name="Kawai Y."/>
            <person name="Isono Y."/>
            <person name="Nakamura Y."/>
            <person name="Nagahari K."/>
            <person name="Murakami K."/>
            <person name="Yasuda T."/>
            <person name="Iwayanagi T."/>
            <person name="Wagatsuma M."/>
            <person name="Shiratori A."/>
            <person name="Sudo H."/>
            <person name="Hosoiri T."/>
            <person name="Kaku Y."/>
            <person name="Kodaira H."/>
            <person name="Kondo H."/>
            <person name="Sugawara M."/>
            <person name="Takahashi M."/>
            <person name="Kanda K."/>
            <person name="Yokoi T."/>
            <person name="Furuya T."/>
            <person name="Kikkawa E."/>
            <person name="Omura Y."/>
            <person name="Abe K."/>
            <person name="Kamihara K."/>
            <person name="Katsuta N."/>
            <person name="Sato K."/>
            <person name="Tanikawa M."/>
            <person name="Yamazaki M."/>
            <person name="Ninomiya K."/>
            <person name="Ishibashi T."/>
            <person name="Yamashita H."/>
            <person name="Murakawa K."/>
            <person name="Fujimori K."/>
            <person name="Tanai H."/>
            <person name="Kimata M."/>
            <person name="Watanabe M."/>
            <person name="Hiraoka S."/>
            <person name="Chiba Y."/>
            <person name="Ishida S."/>
            <person name="Ono Y."/>
            <person name="Takiguchi S."/>
            <person name="Watanabe S."/>
            <person name="Yosida M."/>
            <person name="Hotuta T."/>
            <person name="Kusano J."/>
            <person name="Kanehori K."/>
            <person name="Takahashi-Fujii A."/>
            <person name="Hara H."/>
            <person name="Tanase T.-O."/>
            <person name="Nomura Y."/>
            <person name="Togiya S."/>
            <person name="Komai F."/>
            <person name="Hara R."/>
            <person name="Takeuchi K."/>
            <person name="Arita M."/>
            <person name="Imose N."/>
            <person name="Musashino K."/>
            <person name="Yuuki H."/>
            <person name="Oshima A."/>
            <person name="Sasaki N."/>
            <person name="Aotsuka S."/>
            <person name="Yoshikawa Y."/>
            <person name="Matsunawa H."/>
            <person name="Ichihara T."/>
            <person name="Shiohata N."/>
            <person name="Sano S."/>
            <person name="Moriya S."/>
            <person name="Momiyama H."/>
            <person name="Satoh N."/>
            <person name="Takami S."/>
            <person name="Terashima Y."/>
            <person name="Suzuki O."/>
            <person name="Nakagawa S."/>
            <person name="Senoh A."/>
            <person name="Mizoguchi H."/>
            <person name="Goto Y."/>
            <person name="Shimizu F."/>
            <person name="Wakebe H."/>
            <person name="Hishigaki H."/>
            <person name="Watanabe T."/>
            <person name="Sugiyama A."/>
            <person name="Takemoto M."/>
            <person name="Kawakami B."/>
            <person name="Yamazaki M."/>
            <person name="Watanabe K."/>
            <person name="Kumagai A."/>
            <person name="Itakura S."/>
            <person name="Fukuzumi Y."/>
            <person name="Fujimori Y."/>
            <person name="Komiyama M."/>
            <person name="Tashiro H."/>
            <person name="Tanigami A."/>
            <person name="Fujiwara T."/>
            <person name="Ono T."/>
            <person name="Yamada K."/>
            <person name="Fujii Y."/>
            <person name="Ozaki K."/>
            <person name="Hirao M."/>
            <person name="Ohmori Y."/>
            <person name="Kawabata A."/>
            <person name="Hikiji T."/>
            <person name="Kobatake N."/>
            <person name="Inagaki H."/>
            <person name="Ikema Y."/>
            <person name="Okamoto S."/>
            <person name="Okitani R."/>
            <person name="Kawakami T."/>
            <person name="Noguchi S."/>
            <person name="Itoh T."/>
            <person name="Shigeta K."/>
            <person name="Senba T."/>
            <person name="Matsumura K."/>
            <person name="Nakajima Y."/>
            <person name="Mizuno T."/>
            <person name="Morinaga M."/>
            <person name="Sasaki M."/>
            <person name="Togashi T."/>
            <person name="Oyama M."/>
            <person name="Hata H."/>
            <person name="Watanabe M."/>
            <person name="Komatsu T."/>
            <person name="Mizushima-Sugano J."/>
            <person name="Satoh T."/>
            <person name="Shirai Y."/>
            <person name="Takahashi Y."/>
            <person name="Nakagawa K."/>
            <person name="Okumura K."/>
            <person name="Nagase T."/>
            <person name="Nomura N."/>
            <person name="Kikuchi H."/>
            <person name="Masuho Y."/>
            <person name="Yamashita R."/>
            <person name="Nakai K."/>
            <person name="Yada T."/>
            <person name="Nakamura Y."/>
            <person name="Ohara O."/>
            <person name="Isogai T."/>
            <person name="Sugano S."/>
        </authorList>
    </citation>
    <scope>NUCLEOTIDE SEQUENCE [LARGE SCALE MRNA] (ISOFORM 3)</scope>
    <source>
        <tissue>Corpus callosum</tissue>
    </source>
</reference>
<reference key="5">
    <citation type="journal article" date="2005" name="Nature">
        <title>Generation and annotation of the DNA sequences of human chromosomes 2 and 4.</title>
        <authorList>
            <person name="Hillier L.W."/>
            <person name="Graves T.A."/>
            <person name="Fulton R.S."/>
            <person name="Fulton L.A."/>
            <person name="Pepin K.H."/>
            <person name="Minx P."/>
            <person name="Wagner-McPherson C."/>
            <person name="Layman D."/>
            <person name="Wylie K."/>
            <person name="Sekhon M."/>
            <person name="Becker M.C."/>
            <person name="Fewell G.A."/>
            <person name="Delehaunty K.D."/>
            <person name="Miner T.L."/>
            <person name="Nash W.E."/>
            <person name="Kremitzki C."/>
            <person name="Oddy L."/>
            <person name="Du H."/>
            <person name="Sun H."/>
            <person name="Bradshaw-Cordum H."/>
            <person name="Ali J."/>
            <person name="Carter J."/>
            <person name="Cordes M."/>
            <person name="Harris A."/>
            <person name="Isak A."/>
            <person name="van Brunt A."/>
            <person name="Nguyen C."/>
            <person name="Du F."/>
            <person name="Courtney L."/>
            <person name="Kalicki J."/>
            <person name="Ozersky P."/>
            <person name="Abbott S."/>
            <person name="Armstrong J."/>
            <person name="Belter E.A."/>
            <person name="Caruso L."/>
            <person name="Cedroni M."/>
            <person name="Cotton M."/>
            <person name="Davidson T."/>
            <person name="Desai A."/>
            <person name="Elliott G."/>
            <person name="Erb T."/>
            <person name="Fronick C."/>
            <person name="Gaige T."/>
            <person name="Haakenson W."/>
            <person name="Haglund K."/>
            <person name="Holmes A."/>
            <person name="Harkins R."/>
            <person name="Kim K."/>
            <person name="Kruchowski S.S."/>
            <person name="Strong C.M."/>
            <person name="Grewal N."/>
            <person name="Goyea E."/>
            <person name="Hou S."/>
            <person name="Levy A."/>
            <person name="Martinka S."/>
            <person name="Mead K."/>
            <person name="McLellan M.D."/>
            <person name="Meyer R."/>
            <person name="Randall-Maher J."/>
            <person name="Tomlinson C."/>
            <person name="Dauphin-Kohlberg S."/>
            <person name="Kozlowicz-Reilly A."/>
            <person name="Shah N."/>
            <person name="Swearengen-Shahid S."/>
            <person name="Snider J."/>
            <person name="Strong J.T."/>
            <person name="Thompson J."/>
            <person name="Yoakum M."/>
            <person name="Leonard S."/>
            <person name="Pearman C."/>
            <person name="Trani L."/>
            <person name="Radionenko M."/>
            <person name="Waligorski J.E."/>
            <person name="Wang C."/>
            <person name="Rock S.M."/>
            <person name="Tin-Wollam A.-M."/>
            <person name="Maupin R."/>
            <person name="Latreille P."/>
            <person name="Wendl M.C."/>
            <person name="Yang S.-P."/>
            <person name="Pohl C."/>
            <person name="Wallis J.W."/>
            <person name="Spieth J."/>
            <person name="Bieri T.A."/>
            <person name="Berkowicz N."/>
            <person name="Nelson J.O."/>
            <person name="Osborne J."/>
            <person name="Ding L."/>
            <person name="Meyer R."/>
            <person name="Sabo A."/>
            <person name="Shotland Y."/>
            <person name="Sinha P."/>
            <person name="Wohldmann P.E."/>
            <person name="Cook L.L."/>
            <person name="Hickenbotham M.T."/>
            <person name="Eldred J."/>
            <person name="Williams D."/>
            <person name="Jones T.A."/>
            <person name="She X."/>
            <person name="Ciccarelli F.D."/>
            <person name="Izaurralde E."/>
            <person name="Taylor J."/>
            <person name="Schmutz J."/>
            <person name="Myers R.M."/>
            <person name="Cox D.R."/>
            <person name="Huang X."/>
            <person name="McPherson J.D."/>
            <person name="Mardis E.R."/>
            <person name="Clifton S.W."/>
            <person name="Warren W.C."/>
            <person name="Chinwalla A.T."/>
            <person name="Eddy S.R."/>
            <person name="Marra M.A."/>
            <person name="Ovcharenko I."/>
            <person name="Furey T.S."/>
            <person name="Miller W."/>
            <person name="Eichler E.E."/>
            <person name="Bork P."/>
            <person name="Suyama M."/>
            <person name="Torrents D."/>
            <person name="Waterston R.H."/>
            <person name="Wilson R.K."/>
        </authorList>
    </citation>
    <scope>NUCLEOTIDE SEQUENCE [LARGE SCALE GENOMIC DNA]</scope>
</reference>
<reference key="6">
    <citation type="journal article" date="2004" name="Genome Res.">
        <title>The status, quality, and expansion of the NIH full-length cDNA project: the Mammalian Gene Collection (MGC).</title>
        <authorList>
            <consortium name="The MGC Project Team"/>
        </authorList>
    </citation>
    <scope>NUCLEOTIDE SEQUENCE [LARGE SCALE MRNA] (ISOFORM 1)</scope>
</reference>
<reference key="7">
    <citation type="journal article" date="2006" name="Science">
        <title>The consensus coding sequences of human breast and colorectal cancers.</title>
        <authorList>
            <person name="Sjoeblom T."/>
            <person name="Jones S."/>
            <person name="Wood L.D."/>
            <person name="Parsons D.W."/>
            <person name="Lin J."/>
            <person name="Barber T.D."/>
            <person name="Mandelker D."/>
            <person name="Leary R.J."/>
            <person name="Ptak J."/>
            <person name="Silliman N."/>
            <person name="Szabo S."/>
            <person name="Buckhaults P."/>
            <person name="Farrell C."/>
            <person name="Meeh P."/>
            <person name="Markowitz S.D."/>
            <person name="Willis J."/>
            <person name="Dawson D."/>
            <person name="Willson J.K.V."/>
            <person name="Gazdar A.F."/>
            <person name="Hartigan J."/>
            <person name="Wu L."/>
            <person name="Liu C."/>
            <person name="Parmigiani G."/>
            <person name="Park B.H."/>
            <person name="Bachman K.E."/>
            <person name="Papadopoulos N."/>
            <person name="Vogelstein B."/>
            <person name="Kinzler K.W."/>
            <person name="Velculescu V.E."/>
        </authorList>
    </citation>
    <scope>VARIANT [LARGE SCALE ANALYSIS] GLN-264</scope>
</reference>